<sequence length="415" mass="46982">MGSLGAILKHPEDFYPLLKLKIAARHAEKQIPSEPHWAFCYSMLHKVSRSFGLVIQQLGPQLRDAVCIFYLVLRALDTVEDDTSISTEVKVPILMAFHRHIYDNDWHFSCGTKEYKVLMDEFHHVSNAFLDLGSGYKEAIEDITMRMGAGMAKFICKEVETIDDYDEYCHYVAGLVGLGLSKLFHASGAEDLATDSLSNSMGLFLQKTNIIRDYLEDINEIPKSRMFWPRQIWSKYVDKLEDLKYEENSAKAVQCLNDMVTDALVHAEDCLKYMSDLRGPAIFRFCAIPQIMAIGTLALCFNNTQVFRGVVKMRRGLTAKVIDQTKTMSDVYGAFFDFSCLLKSKVDNNDPNATKTLSRLEAIQKICKNSGALTTKRKSYIIENESGYNSTLIVILFIILAILYAYLSSNLPNSL</sequence>
<comment type="function">
    <text evidence="2 7">Component of the triterpene saponins (e.g. ginsenosides or panaxosides) and phytosterols biosynthetic pathways (PubMed:29378087). Catalyzes the biosynthesis of squalene (By similarity).</text>
</comment>
<comment type="catalytic activity">
    <reaction evidence="3">
        <text>2 (2E,6E)-farnesyl diphosphate + NADH + H(+) = squalene + 2 diphosphate + NAD(+)</text>
        <dbReference type="Rhea" id="RHEA:32299"/>
        <dbReference type="ChEBI" id="CHEBI:15378"/>
        <dbReference type="ChEBI" id="CHEBI:15440"/>
        <dbReference type="ChEBI" id="CHEBI:33019"/>
        <dbReference type="ChEBI" id="CHEBI:57540"/>
        <dbReference type="ChEBI" id="CHEBI:57945"/>
        <dbReference type="ChEBI" id="CHEBI:175763"/>
        <dbReference type="EC" id="2.5.1.21"/>
    </reaction>
    <physiologicalReaction direction="left-to-right" evidence="1">
        <dbReference type="Rhea" id="RHEA:32300"/>
    </physiologicalReaction>
</comment>
<comment type="catalytic activity">
    <reaction evidence="3">
        <text>2 (2E,6E)-farnesyl diphosphate + NADPH + H(+) = squalene + 2 diphosphate + NADP(+)</text>
        <dbReference type="Rhea" id="RHEA:32295"/>
        <dbReference type="ChEBI" id="CHEBI:15378"/>
        <dbReference type="ChEBI" id="CHEBI:15440"/>
        <dbReference type="ChEBI" id="CHEBI:33019"/>
        <dbReference type="ChEBI" id="CHEBI:57783"/>
        <dbReference type="ChEBI" id="CHEBI:58349"/>
        <dbReference type="ChEBI" id="CHEBI:175763"/>
        <dbReference type="EC" id="2.5.1.21"/>
    </reaction>
    <physiologicalReaction direction="left-to-right" evidence="1">
        <dbReference type="Rhea" id="RHEA:32296"/>
    </physiologicalReaction>
</comment>
<comment type="cofactor">
    <cofactor evidence="3">
        <name>Mg(2+)</name>
        <dbReference type="ChEBI" id="CHEBI:18420"/>
    </cofactor>
    <cofactor evidence="3">
        <name>Mn(2+)</name>
        <dbReference type="ChEBI" id="CHEBI:29035"/>
    </cofactor>
</comment>
<comment type="pathway">
    <text evidence="3">Terpene metabolism; lanosterol biosynthesis; lanosterol from farnesyl diphosphate: step 1/3.</text>
</comment>
<comment type="subcellular location">
    <subcellularLocation>
        <location evidence="3">Endoplasmic reticulum membrane</location>
        <topology evidence="4">Multi-pass membrane protein</topology>
    </subcellularLocation>
</comment>
<comment type="induction">
    <text evidence="5">Induced methyl jasmonate (MeJA) in adventitious roots.</text>
</comment>
<comment type="similarity">
    <text evidence="8">Belongs to the phytoene/squalene synthase family.</text>
</comment>
<reference key="1">
    <citation type="journal article" date="2015" name="Int. J. Mol. Sci.">
        <title>Transcriptome analysis of methyl jasmonate-elicited Panax ginseng adventitious roots to discover putative ginsenoside biosynthesis and transport genes.</title>
        <authorList>
            <person name="Cao H."/>
            <person name="Nuruzzaman M."/>
            <person name="Xiu H."/>
            <person name="Huang J."/>
            <person name="Wu K."/>
            <person name="Chen X."/>
            <person name="Li J."/>
            <person name="Wang L."/>
            <person name="Jeong J.-H."/>
            <person name="Park S.-J."/>
            <person name="Yang F."/>
            <person name="Luo J."/>
            <person name="Luo Z."/>
        </authorList>
    </citation>
    <scope>NUCLEOTIDE SEQUENCE [LARGE SCALE MRNA]</scope>
    <scope>INDUCTION BY METHYL JASMONATE</scope>
    <source>
        <strain>cv. Damaya</strain>
    </source>
</reference>
<reference key="2">
    <citation type="journal article" date="2018" name="Biotechnol. Appl. Biochem.">
        <title>Advances in ginsenoside biosynthesis and metabolic regulation.</title>
        <authorList>
            <person name="Lu J."/>
            <person name="Li J."/>
            <person name="Wang S."/>
            <person name="Yao L."/>
            <person name="Liang W."/>
            <person name="Wang J."/>
            <person name="Gao W."/>
        </authorList>
    </citation>
    <scope>REVIEW</scope>
</reference>
<reference key="3">
    <citation type="journal article" date="2018" name="Molecules">
        <title>Progress on the studies of the key enzymes of ginsenoside biosynthesis.</title>
        <authorList>
            <person name="Yang J.-L."/>
            <person name="Hu Z.-F."/>
            <person name="Zhang T.-T."/>
            <person name="Gu A.-D."/>
            <person name="Gong T."/>
            <person name="Zhu P."/>
        </authorList>
    </citation>
    <scope>REVIEW</scope>
</reference>
<organism>
    <name type="scientific">Panax ginseng</name>
    <name type="common">Korean ginseng</name>
    <dbReference type="NCBI Taxonomy" id="4054"/>
    <lineage>
        <taxon>Eukaryota</taxon>
        <taxon>Viridiplantae</taxon>
        <taxon>Streptophyta</taxon>
        <taxon>Embryophyta</taxon>
        <taxon>Tracheophyta</taxon>
        <taxon>Spermatophyta</taxon>
        <taxon>Magnoliopsida</taxon>
        <taxon>eudicotyledons</taxon>
        <taxon>Gunneridae</taxon>
        <taxon>Pentapetalae</taxon>
        <taxon>asterids</taxon>
        <taxon>campanulids</taxon>
        <taxon>Apiales</taxon>
        <taxon>Araliaceae</taxon>
        <taxon>Panax</taxon>
    </lineage>
</organism>
<evidence type="ECO:0000250" key="1">
    <source>
        <dbReference type="UniProtKB" id="D2K762"/>
    </source>
</evidence>
<evidence type="ECO:0000250" key="2">
    <source>
        <dbReference type="UniProtKB" id="O48666"/>
    </source>
</evidence>
<evidence type="ECO:0000250" key="3">
    <source>
        <dbReference type="UniProtKB" id="P53799"/>
    </source>
</evidence>
<evidence type="ECO:0000255" key="4"/>
<evidence type="ECO:0000269" key="5">
    <source>
    </source>
</evidence>
<evidence type="ECO:0000303" key="6">
    <source>
    </source>
</evidence>
<evidence type="ECO:0000303" key="7">
    <source>
    </source>
</evidence>
<evidence type="ECO:0000305" key="8"/>
<keyword id="KW-0256">Endoplasmic reticulum</keyword>
<keyword id="KW-0414">Isoprene biosynthesis</keyword>
<keyword id="KW-0472">Membrane</keyword>
<keyword id="KW-0808">Transferase</keyword>
<keyword id="KW-0812">Transmembrane</keyword>
<keyword id="KW-1133">Transmembrane helix</keyword>
<name>SQS10_PANGI</name>
<feature type="chain" id="PRO_0000446956" description="Squalene synthase 10">
    <location>
        <begin position="1"/>
        <end position="415"/>
    </location>
</feature>
<feature type="transmembrane region" description="Helical" evidence="4">
    <location>
        <begin position="281"/>
        <end position="301"/>
    </location>
</feature>
<feature type="transmembrane region" description="Helical" evidence="4">
    <location>
        <begin position="392"/>
        <end position="412"/>
    </location>
</feature>
<protein>
    <recommendedName>
        <fullName evidence="6">Squalene synthase 10</fullName>
        <shortName evidence="8">PgSS10</shortName>
        <shortName evidence="8">SQS 10</shortName>
        <ecNumber evidence="3">2.5.1.21</ecNumber>
    </recommendedName>
    <alternativeName>
        <fullName evidence="8">FPP:FPP farnesyltransferase SS10</fullName>
    </alternativeName>
    <alternativeName>
        <fullName evidence="8">Farnesyl-diphosphate farnesyltransferase SS10</fullName>
    </alternativeName>
</protein>
<dbReference type="EC" id="2.5.1.21" evidence="3"/>
<dbReference type="EMBL" id="KP689320">
    <property type="protein sequence ID" value="AJK30632.1"/>
    <property type="molecule type" value="mRNA"/>
</dbReference>
<dbReference type="SMR" id="A0A1P7Y0A2"/>
<dbReference type="UniPathway" id="UPA00767">
    <property type="reaction ID" value="UER00751"/>
</dbReference>
<dbReference type="GO" id="GO:0005789">
    <property type="term" value="C:endoplasmic reticulum membrane"/>
    <property type="evidence" value="ECO:0007669"/>
    <property type="project" value="UniProtKB-SubCell"/>
</dbReference>
<dbReference type="GO" id="GO:0051996">
    <property type="term" value="F:squalene synthase [NAD(P)H] activity"/>
    <property type="evidence" value="ECO:0007669"/>
    <property type="project" value="UniProtKB-EC"/>
</dbReference>
<dbReference type="GO" id="GO:0045338">
    <property type="term" value="P:farnesyl diphosphate metabolic process"/>
    <property type="evidence" value="ECO:0007669"/>
    <property type="project" value="InterPro"/>
</dbReference>
<dbReference type="GO" id="GO:0008299">
    <property type="term" value="P:isoprenoid biosynthetic process"/>
    <property type="evidence" value="ECO:0007669"/>
    <property type="project" value="UniProtKB-KW"/>
</dbReference>
<dbReference type="GO" id="GO:0009753">
    <property type="term" value="P:response to jasmonic acid"/>
    <property type="evidence" value="ECO:0000270"/>
    <property type="project" value="UniProtKB"/>
</dbReference>
<dbReference type="CDD" id="cd00683">
    <property type="entry name" value="Trans_IPPS_HH"/>
    <property type="match status" value="1"/>
</dbReference>
<dbReference type="FunFam" id="1.10.600.10:FF:000012">
    <property type="entry name" value="Squalene synthase 1"/>
    <property type="match status" value="1"/>
</dbReference>
<dbReference type="Gene3D" id="1.10.600.10">
    <property type="entry name" value="Farnesyl Diphosphate Synthase"/>
    <property type="match status" value="1"/>
</dbReference>
<dbReference type="InterPro" id="IPR008949">
    <property type="entry name" value="Isoprenoid_synthase_dom_sf"/>
</dbReference>
<dbReference type="InterPro" id="IPR002060">
    <property type="entry name" value="Squ/phyt_synthse"/>
</dbReference>
<dbReference type="InterPro" id="IPR006449">
    <property type="entry name" value="Squal_synth-like"/>
</dbReference>
<dbReference type="InterPro" id="IPR019845">
    <property type="entry name" value="Squalene/phytoene_synthase_CS"/>
</dbReference>
<dbReference type="InterPro" id="IPR044844">
    <property type="entry name" value="Trans_IPPS_euk-type"/>
</dbReference>
<dbReference type="InterPro" id="IPR033904">
    <property type="entry name" value="Trans_IPPS_HH"/>
</dbReference>
<dbReference type="NCBIfam" id="TIGR01559">
    <property type="entry name" value="squal_synth"/>
    <property type="match status" value="1"/>
</dbReference>
<dbReference type="PANTHER" id="PTHR11626">
    <property type="entry name" value="FARNESYL-DIPHOSPHATE FARNESYLTRANSFERASE"/>
    <property type="match status" value="1"/>
</dbReference>
<dbReference type="PANTHER" id="PTHR11626:SF2">
    <property type="entry name" value="SQUALENE SYNTHASE"/>
    <property type="match status" value="1"/>
</dbReference>
<dbReference type="Pfam" id="PF00494">
    <property type="entry name" value="SQS_PSY"/>
    <property type="match status" value="1"/>
</dbReference>
<dbReference type="SFLD" id="SFLDS00005">
    <property type="entry name" value="Isoprenoid_Synthase_Type_I"/>
    <property type="match status" value="1"/>
</dbReference>
<dbReference type="SFLD" id="SFLDG01018">
    <property type="entry name" value="Squalene/Phytoene_Synthase_Lik"/>
    <property type="match status" value="1"/>
</dbReference>
<dbReference type="SUPFAM" id="SSF48576">
    <property type="entry name" value="Terpenoid synthases"/>
    <property type="match status" value="1"/>
</dbReference>
<dbReference type="PROSITE" id="PS01044">
    <property type="entry name" value="SQUALEN_PHYTOEN_SYN_1"/>
    <property type="match status" value="1"/>
</dbReference>
<dbReference type="PROSITE" id="PS01045">
    <property type="entry name" value="SQUALEN_PHYTOEN_SYN_2"/>
    <property type="match status" value="1"/>
</dbReference>
<proteinExistence type="evidence at transcript level"/>
<accession>A0A1P7Y0A2</accession>
<gene>
    <name evidence="6" type="primary">SS10</name>
</gene>